<accession>P02855</accession>
<proteinExistence type="inferred from homology"/>
<name>VCLA_PEA</name>
<comment type="function">
    <text>Seed storage protein.</text>
</comment>
<comment type="subcellular location">
    <subcellularLocation>
        <location>Vacuole</location>
        <location>Aleurone grain</location>
    </subcellularLocation>
    <subcellularLocation>
        <location>Vacuole</location>
    </subcellularLocation>
    <text>Cotyledonary membrane-bound vacuolar protein bodies.</text>
</comment>
<comment type="similarity">
    <text evidence="3">Belongs to the 7S seed storage protein family.</text>
</comment>
<keyword id="KW-0708">Seed storage protein</keyword>
<keyword id="KW-0758">Storage protein</keyword>
<keyword id="KW-0926">Vacuole</keyword>
<feature type="chain" id="PRO_0000142294" description="Provicilin">
    <location>
        <begin position="1" status="less than"/>
        <end position="275"/>
    </location>
</feature>
<feature type="domain" description="Cupin type-1" evidence="1">
    <location>
        <begin position="66"/>
        <end position="238"/>
    </location>
</feature>
<feature type="region of interest" description="Disordered" evidence="2">
    <location>
        <begin position="1"/>
        <end position="71"/>
    </location>
</feature>
<feature type="region of interest" description="Disordered" evidence="2">
    <location>
        <begin position="134"/>
        <end position="164"/>
    </location>
</feature>
<feature type="compositionally biased region" description="Basic and acidic residues" evidence="2">
    <location>
        <begin position="1"/>
        <end position="17"/>
    </location>
</feature>
<feature type="compositionally biased region" description="Low complexity" evidence="2">
    <location>
        <begin position="50"/>
        <end position="63"/>
    </location>
</feature>
<feature type="compositionally biased region" description="Acidic residues" evidence="2">
    <location>
        <begin position="147"/>
        <end position="157"/>
    </location>
</feature>
<feature type="non-terminal residue">
    <location>
        <position position="1"/>
    </location>
</feature>
<organism>
    <name type="scientific">Pisum sativum</name>
    <name type="common">Garden pea</name>
    <name type="synonym">Lathyrus oleraceus</name>
    <dbReference type="NCBI Taxonomy" id="3888"/>
    <lineage>
        <taxon>Eukaryota</taxon>
        <taxon>Viridiplantae</taxon>
        <taxon>Streptophyta</taxon>
        <taxon>Embryophyta</taxon>
        <taxon>Tracheophyta</taxon>
        <taxon>Spermatophyta</taxon>
        <taxon>Magnoliopsida</taxon>
        <taxon>eudicotyledons</taxon>
        <taxon>Gunneridae</taxon>
        <taxon>Pentapetalae</taxon>
        <taxon>rosids</taxon>
        <taxon>fabids</taxon>
        <taxon>Fabales</taxon>
        <taxon>Fabaceae</taxon>
        <taxon>Papilionoideae</taxon>
        <taxon>50 kb inversion clade</taxon>
        <taxon>NPAAA clade</taxon>
        <taxon>Hologalegina</taxon>
        <taxon>IRL clade</taxon>
        <taxon>Fabeae</taxon>
        <taxon>Pisum</taxon>
    </lineage>
</organism>
<evidence type="ECO:0000255" key="1"/>
<evidence type="ECO:0000256" key="2">
    <source>
        <dbReference type="SAM" id="MobiDB-lite"/>
    </source>
</evidence>
<evidence type="ECO:0000305" key="3"/>
<reference key="1">
    <citation type="journal article" date="1983" name="Nucleic Acids Res.">
        <title>The vicilin gene family of pea (Pisum sativum L.): a complete cDNA coding sequence for preprovicilin.</title>
        <authorList>
            <person name="Lycett G.W."/>
            <person name="Delauney A.J."/>
            <person name="Gatehouse J.A."/>
            <person name="Gilroy J."/>
            <person name="Croy R.R.D."/>
            <person name="Boulter D."/>
        </authorList>
    </citation>
    <scope>NUCLEOTIDE SEQUENCE (CLONE PDUB2)</scope>
    <source>
        <strain>cv. Feltham First</strain>
    </source>
</reference>
<sequence>DNAEIEKILLEEHEKETHHRRGLRDKRQQSQEKNVIVKVSKKQIEELSKNAKSSSKKSVSSRSEPFNLKSSDPIYSNQYGKFFEITPKKNPQLQDLDIFVNYVEIKEGSLWLPHYNSRAIVIVTVNEGKGDFELVGQRNENQQGLREEDDEEEEQREEETKNQVQSYKAKLTPGDVFVIPAGHPVAVRASSNLNLLGFGINAENNQRNFLAGEEDNVISQIQKQVKDLTFPGSAQEVDRLLENQKQSYFANAQPQQRETRSQEIKEHLYSILGAF</sequence>
<protein>
    <recommendedName>
        <fullName>Provicilin</fullName>
    </recommendedName>
    <alternativeName>
        <fullName>Type A</fullName>
    </alternativeName>
</protein>
<dbReference type="PIR" id="A03345">
    <property type="entry name" value="FWPMVA"/>
</dbReference>
<dbReference type="SMR" id="P02855"/>
<dbReference type="GO" id="GO:0033095">
    <property type="term" value="C:aleurone grain"/>
    <property type="evidence" value="ECO:0007669"/>
    <property type="project" value="UniProtKB-SubCell"/>
</dbReference>
<dbReference type="GO" id="GO:0005773">
    <property type="term" value="C:vacuole"/>
    <property type="evidence" value="ECO:0007669"/>
    <property type="project" value="UniProtKB-SubCell"/>
</dbReference>
<dbReference type="GO" id="GO:0045735">
    <property type="term" value="F:nutrient reservoir activity"/>
    <property type="evidence" value="ECO:0007669"/>
    <property type="project" value="UniProtKB-KW"/>
</dbReference>
<dbReference type="CDD" id="cd02245">
    <property type="entry name" value="cupin_7S_vicilin-like_C"/>
    <property type="match status" value="1"/>
</dbReference>
<dbReference type="Gene3D" id="2.60.120.10">
    <property type="entry name" value="Jelly Rolls"/>
    <property type="match status" value="2"/>
</dbReference>
<dbReference type="InterPro" id="IPR006045">
    <property type="entry name" value="Cupin_1"/>
</dbReference>
<dbReference type="InterPro" id="IPR014710">
    <property type="entry name" value="RmlC-like_jellyroll"/>
</dbReference>
<dbReference type="InterPro" id="IPR011051">
    <property type="entry name" value="RmlC_Cupin_sf"/>
</dbReference>
<dbReference type="InterPro" id="IPR050253">
    <property type="entry name" value="Seed_Storage-Functional"/>
</dbReference>
<dbReference type="PANTHER" id="PTHR31189">
    <property type="entry name" value="OS03G0336100 PROTEIN-RELATED"/>
    <property type="match status" value="1"/>
</dbReference>
<dbReference type="PANTHER" id="PTHR31189:SF41">
    <property type="entry name" value="VICILIN C72"/>
    <property type="match status" value="1"/>
</dbReference>
<dbReference type="Pfam" id="PF00190">
    <property type="entry name" value="Cupin_1"/>
    <property type="match status" value="1"/>
</dbReference>
<dbReference type="SMART" id="SM00835">
    <property type="entry name" value="Cupin_1"/>
    <property type="match status" value="1"/>
</dbReference>
<dbReference type="SUPFAM" id="SSF51182">
    <property type="entry name" value="RmlC-like cupins"/>
    <property type="match status" value="1"/>
</dbReference>